<feature type="chain" id="PRO_1000138197" description="Regulator of sigma D">
    <location>
        <begin position="1"/>
        <end position="162"/>
    </location>
</feature>
<evidence type="ECO:0000255" key="1">
    <source>
        <dbReference type="HAMAP-Rule" id="MF_01181"/>
    </source>
</evidence>
<name>RSD_SALA4</name>
<gene>
    <name evidence="1" type="primary">rsd</name>
    <name type="ordered locus">SeAg_B4409</name>
</gene>
<accession>B5F1H8</accession>
<keyword id="KW-0963">Cytoplasm</keyword>
<keyword id="KW-0804">Transcription</keyword>
<keyword id="KW-0805">Transcription regulation</keyword>
<dbReference type="EMBL" id="CP001138">
    <property type="protein sequence ID" value="ACH49405.1"/>
    <property type="molecule type" value="Genomic_DNA"/>
</dbReference>
<dbReference type="RefSeq" id="WP_000934315.1">
    <property type="nucleotide sequence ID" value="NC_011149.1"/>
</dbReference>
<dbReference type="SMR" id="B5F1H8"/>
<dbReference type="KEGG" id="sea:SeAg_B4409"/>
<dbReference type="HOGENOM" id="CLU_142729_0_0_6"/>
<dbReference type="Proteomes" id="UP000008819">
    <property type="component" value="Chromosome"/>
</dbReference>
<dbReference type="GO" id="GO:0005737">
    <property type="term" value="C:cytoplasm"/>
    <property type="evidence" value="ECO:0007669"/>
    <property type="project" value="UniProtKB-SubCell"/>
</dbReference>
<dbReference type="GO" id="GO:0006355">
    <property type="term" value="P:regulation of DNA-templated transcription"/>
    <property type="evidence" value="ECO:0007669"/>
    <property type="project" value="InterPro"/>
</dbReference>
<dbReference type="FunFam" id="1.20.120.1370:FF:000001">
    <property type="entry name" value="Regulator of sigma D"/>
    <property type="match status" value="1"/>
</dbReference>
<dbReference type="Gene3D" id="1.20.120.1370">
    <property type="entry name" value="Regulator of RNA polymerase sigma(70) subunit, domain 4"/>
    <property type="match status" value="1"/>
</dbReference>
<dbReference type="HAMAP" id="MF_01181">
    <property type="entry name" value="Rsd"/>
    <property type="match status" value="1"/>
</dbReference>
<dbReference type="InterPro" id="IPR038309">
    <property type="entry name" value="Rsd/AlgQ_sf"/>
</dbReference>
<dbReference type="InterPro" id="IPR023785">
    <property type="entry name" value="Sigma70_reg_Rsd"/>
</dbReference>
<dbReference type="InterPro" id="IPR007448">
    <property type="entry name" value="Sigma70_reg_Rsd_AlgQ"/>
</dbReference>
<dbReference type="NCBIfam" id="NF008723">
    <property type="entry name" value="PRK11718.1"/>
    <property type="match status" value="1"/>
</dbReference>
<dbReference type="Pfam" id="PF04353">
    <property type="entry name" value="Rsd_AlgQ"/>
    <property type="match status" value="1"/>
</dbReference>
<dbReference type="PIRSF" id="PIRSF016548">
    <property type="entry name" value="Rsd_AlgQ"/>
    <property type="match status" value="1"/>
</dbReference>
<comment type="function">
    <text evidence="1">Binds RpoD and negatively regulates RpoD-mediated transcription activation by preventing the interaction between the primary sigma factor RpoD with the catalytic core of the RNA polymerase and with promoter DNA. May be involved in replacement of the RNA polymerase sigma subunit from RpoD to RpoS during the transition from exponential growth to the stationary phase.</text>
</comment>
<comment type="subunit">
    <text evidence="1">Interacts with RpoD.</text>
</comment>
<comment type="subcellular location">
    <subcellularLocation>
        <location evidence="1">Cytoplasm</location>
    </subcellularLocation>
</comment>
<comment type="similarity">
    <text evidence="1">Belongs to the Rsd/AlgQ family.</text>
</comment>
<proteinExistence type="inferred from homology"/>
<reference key="1">
    <citation type="journal article" date="2011" name="J. Bacteriol.">
        <title>Comparative genomics of 28 Salmonella enterica isolates: evidence for CRISPR-mediated adaptive sublineage evolution.</title>
        <authorList>
            <person name="Fricke W.F."/>
            <person name="Mammel M.K."/>
            <person name="McDermott P.F."/>
            <person name="Tartera C."/>
            <person name="White D.G."/>
            <person name="Leclerc J.E."/>
            <person name="Ravel J."/>
            <person name="Cebula T.A."/>
        </authorList>
    </citation>
    <scope>NUCLEOTIDE SEQUENCE [LARGE SCALE GENOMIC DNA]</scope>
    <source>
        <strain>SL483</strain>
    </source>
</reference>
<organism>
    <name type="scientific">Salmonella agona (strain SL483)</name>
    <dbReference type="NCBI Taxonomy" id="454166"/>
    <lineage>
        <taxon>Bacteria</taxon>
        <taxon>Pseudomonadati</taxon>
        <taxon>Pseudomonadota</taxon>
        <taxon>Gammaproteobacteria</taxon>
        <taxon>Enterobacterales</taxon>
        <taxon>Enterobacteriaceae</taxon>
        <taxon>Salmonella</taxon>
    </lineage>
</organism>
<sequence>MLNQLENLTERVGGSNKLVDRWLDVRKHLLVAYYNLVGIKPGKESYMRLNEKALDDFCQSLVDYLSAGHFSIYERILHKLEGNGQLLHAAKIWPLLEDNTQRIMDYYDTSLETAIDHDNCLEFQQALSDIGEALEARFVLEDKLIMLVFDAMHDGARVKRPA</sequence>
<protein>
    <recommendedName>
        <fullName evidence="1">Regulator of sigma D</fullName>
    </recommendedName>
</protein>